<protein>
    <recommendedName>
        <fullName evidence="1">Large ribosomal subunit protein uL2</fullName>
    </recommendedName>
    <alternativeName>
        <fullName evidence="3">50S ribosomal protein L2</fullName>
    </alternativeName>
</protein>
<evidence type="ECO:0000255" key="1">
    <source>
        <dbReference type="HAMAP-Rule" id="MF_01320"/>
    </source>
</evidence>
<evidence type="ECO:0000256" key="2">
    <source>
        <dbReference type="SAM" id="MobiDB-lite"/>
    </source>
</evidence>
<evidence type="ECO:0000305" key="3"/>
<reference key="1">
    <citation type="journal article" date="2005" name="DNA Res.">
        <title>Complete genome sequence of the facultative anaerobic magnetotactic bacterium Magnetospirillum sp. strain AMB-1.</title>
        <authorList>
            <person name="Matsunaga T."/>
            <person name="Okamura Y."/>
            <person name="Fukuda Y."/>
            <person name="Wahyudi A.T."/>
            <person name="Murase Y."/>
            <person name="Takeyama H."/>
        </authorList>
    </citation>
    <scope>NUCLEOTIDE SEQUENCE [LARGE SCALE GENOMIC DNA]</scope>
    <source>
        <strain>ATCC 700264 / AMB-1</strain>
    </source>
</reference>
<accession>Q2W2J4</accession>
<feature type="chain" id="PRO_0000237202" description="Large ribosomal subunit protein uL2">
    <location>
        <begin position="1"/>
        <end position="275"/>
    </location>
</feature>
<feature type="region of interest" description="Disordered" evidence="2">
    <location>
        <begin position="225"/>
        <end position="275"/>
    </location>
</feature>
<gene>
    <name evidence="1" type="primary">rplB</name>
    <name type="ordered locus">amb3127</name>
</gene>
<organism>
    <name type="scientific">Paramagnetospirillum magneticum (strain ATCC 700264 / AMB-1)</name>
    <name type="common">Magnetospirillum magneticum</name>
    <dbReference type="NCBI Taxonomy" id="342108"/>
    <lineage>
        <taxon>Bacteria</taxon>
        <taxon>Pseudomonadati</taxon>
        <taxon>Pseudomonadota</taxon>
        <taxon>Alphaproteobacteria</taxon>
        <taxon>Rhodospirillales</taxon>
        <taxon>Magnetospirillaceae</taxon>
        <taxon>Paramagnetospirillum</taxon>
    </lineage>
</organism>
<keyword id="KW-0687">Ribonucleoprotein</keyword>
<keyword id="KW-0689">Ribosomal protein</keyword>
<keyword id="KW-0694">RNA-binding</keyword>
<keyword id="KW-0699">rRNA-binding</keyword>
<dbReference type="EMBL" id="AP007255">
    <property type="protein sequence ID" value="BAE51931.1"/>
    <property type="molecule type" value="Genomic_DNA"/>
</dbReference>
<dbReference type="RefSeq" id="WP_011385496.1">
    <property type="nucleotide sequence ID" value="NC_007626.1"/>
</dbReference>
<dbReference type="SMR" id="Q2W2J4"/>
<dbReference type="STRING" id="342108.amb3127"/>
<dbReference type="KEGG" id="mag:amb3127"/>
<dbReference type="HOGENOM" id="CLU_036235_2_1_5"/>
<dbReference type="OrthoDB" id="9778722at2"/>
<dbReference type="Proteomes" id="UP000007058">
    <property type="component" value="Chromosome"/>
</dbReference>
<dbReference type="GO" id="GO:0015934">
    <property type="term" value="C:large ribosomal subunit"/>
    <property type="evidence" value="ECO:0007669"/>
    <property type="project" value="InterPro"/>
</dbReference>
<dbReference type="GO" id="GO:0019843">
    <property type="term" value="F:rRNA binding"/>
    <property type="evidence" value="ECO:0007669"/>
    <property type="project" value="UniProtKB-UniRule"/>
</dbReference>
<dbReference type="GO" id="GO:0003735">
    <property type="term" value="F:structural constituent of ribosome"/>
    <property type="evidence" value="ECO:0007669"/>
    <property type="project" value="InterPro"/>
</dbReference>
<dbReference type="GO" id="GO:0016740">
    <property type="term" value="F:transferase activity"/>
    <property type="evidence" value="ECO:0007669"/>
    <property type="project" value="InterPro"/>
</dbReference>
<dbReference type="GO" id="GO:0002181">
    <property type="term" value="P:cytoplasmic translation"/>
    <property type="evidence" value="ECO:0007669"/>
    <property type="project" value="TreeGrafter"/>
</dbReference>
<dbReference type="FunFam" id="2.30.30.30:FF:000001">
    <property type="entry name" value="50S ribosomal protein L2"/>
    <property type="match status" value="1"/>
</dbReference>
<dbReference type="FunFam" id="2.40.50.140:FF:000003">
    <property type="entry name" value="50S ribosomal protein L2"/>
    <property type="match status" value="1"/>
</dbReference>
<dbReference type="FunFam" id="4.10.950.10:FF:000001">
    <property type="entry name" value="50S ribosomal protein L2"/>
    <property type="match status" value="1"/>
</dbReference>
<dbReference type="Gene3D" id="2.30.30.30">
    <property type="match status" value="1"/>
</dbReference>
<dbReference type="Gene3D" id="2.40.50.140">
    <property type="entry name" value="Nucleic acid-binding proteins"/>
    <property type="match status" value="1"/>
</dbReference>
<dbReference type="Gene3D" id="4.10.950.10">
    <property type="entry name" value="Ribosomal protein L2, domain 3"/>
    <property type="match status" value="1"/>
</dbReference>
<dbReference type="HAMAP" id="MF_01320_B">
    <property type="entry name" value="Ribosomal_uL2_B"/>
    <property type="match status" value="1"/>
</dbReference>
<dbReference type="InterPro" id="IPR012340">
    <property type="entry name" value="NA-bd_OB-fold"/>
</dbReference>
<dbReference type="InterPro" id="IPR014722">
    <property type="entry name" value="Rib_uL2_dom2"/>
</dbReference>
<dbReference type="InterPro" id="IPR002171">
    <property type="entry name" value="Ribosomal_uL2"/>
</dbReference>
<dbReference type="InterPro" id="IPR005880">
    <property type="entry name" value="Ribosomal_uL2_bac/org-type"/>
</dbReference>
<dbReference type="InterPro" id="IPR022669">
    <property type="entry name" value="Ribosomal_uL2_C"/>
</dbReference>
<dbReference type="InterPro" id="IPR022671">
    <property type="entry name" value="Ribosomal_uL2_CS"/>
</dbReference>
<dbReference type="InterPro" id="IPR014726">
    <property type="entry name" value="Ribosomal_uL2_dom3"/>
</dbReference>
<dbReference type="InterPro" id="IPR022666">
    <property type="entry name" value="Ribosomal_uL2_RNA-bd_dom"/>
</dbReference>
<dbReference type="InterPro" id="IPR008991">
    <property type="entry name" value="Translation_prot_SH3-like_sf"/>
</dbReference>
<dbReference type="NCBIfam" id="TIGR01171">
    <property type="entry name" value="rplB_bact"/>
    <property type="match status" value="1"/>
</dbReference>
<dbReference type="PANTHER" id="PTHR13691:SF5">
    <property type="entry name" value="LARGE RIBOSOMAL SUBUNIT PROTEIN UL2M"/>
    <property type="match status" value="1"/>
</dbReference>
<dbReference type="PANTHER" id="PTHR13691">
    <property type="entry name" value="RIBOSOMAL PROTEIN L2"/>
    <property type="match status" value="1"/>
</dbReference>
<dbReference type="Pfam" id="PF00181">
    <property type="entry name" value="Ribosomal_L2"/>
    <property type="match status" value="1"/>
</dbReference>
<dbReference type="Pfam" id="PF03947">
    <property type="entry name" value="Ribosomal_L2_C"/>
    <property type="match status" value="1"/>
</dbReference>
<dbReference type="PIRSF" id="PIRSF002158">
    <property type="entry name" value="Ribosomal_L2"/>
    <property type="match status" value="1"/>
</dbReference>
<dbReference type="SMART" id="SM01383">
    <property type="entry name" value="Ribosomal_L2"/>
    <property type="match status" value="1"/>
</dbReference>
<dbReference type="SMART" id="SM01382">
    <property type="entry name" value="Ribosomal_L2_C"/>
    <property type="match status" value="1"/>
</dbReference>
<dbReference type="SUPFAM" id="SSF50249">
    <property type="entry name" value="Nucleic acid-binding proteins"/>
    <property type="match status" value="1"/>
</dbReference>
<dbReference type="SUPFAM" id="SSF50104">
    <property type="entry name" value="Translation proteins SH3-like domain"/>
    <property type="match status" value="1"/>
</dbReference>
<dbReference type="PROSITE" id="PS00467">
    <property type="entry name" value="RIBOSOMAL_L2"/>
    <property type="match status" value="1"/>
</dbReference>
<comment type="function">
    <text evidence="1">One of the primary rRNA binding proteins. Required for association of the 30S and 50S subunits to form the 70S ribosome, for tRNA binding and peptide bond formation. It has been suggested to have peptidyltransferase activity; this is somewhat controversial. Makes several contacts with the 16S rRNA in the 70S ribosome.</text>
</comment>
<comment type="subunit">
    <text evidence="1">Part of the 50S ribosomal subunit. Forms a bridge to the 30S subunit in the 70S ribosome.</text>
</comment>
<comment type="similarity">
    <text evidence="1">Belongs to the universal ribosomal protein uL2 family.</text>
</comment>
<proteinExistence type="inferred from homology"/>
<sequence length="275" mass="30251">MALKTFKPTTPGRRQLVLVDRSELWKGKPEKSLTEGLRSKGGRNNTGRVTVRWRGGGHKRRYRIIDFKRNKFDVAATVERLEYDPNRTAFIALVSYADGEKAYIIAPQRLAVGDQVIASEKADIKPGNAMPLKNIPVGTIVHNVELKVGKGGQLARSAGTYVQLVGKDQGYAQLRLASGELRMVRGECMATIGAVSNPDQQNVSLGKAGRAVWMGRRPSVRGVAMNPIDHPHGGGEGRTSGGRHPVTPWGKPTKGKKTRSNKKTDRLIMRRRQTQ</sequence>
<name>RL2_PARM1</name>